<name>IGBP1_MOUSE</name>
<protein>
    <recommendedName>
        <fullName>Immunoglobulin-binding protein 1</fullName>
    </recommendedName>
    <alternativeName>
        <fullName>Alpha4 phosphoprotein</fullName>
    </alternativeName>
    <alternativeName>
        <fullName>CD79a-binding protein 1</fullName>
    </alternativeName>
    <alternativeName>
        <fullName>Lymphocyte signal transduction molecule alpha 4</fullName>
    </alternativeName>
    <alternativeName>
        <fullName>Protein phosphatase 2/4/6 regulatory subunit</fullName>
    </alternativeName>
    <alternativeName>
        <fullName>p52</fullName>
    </alternativeName>
</protein>
<accession>Q61249</accession>
<comment type="function">
    <text>Associated to surface IgM-receptor; may be involved in signal transduction. Involved in regulation of the catalytic activity of the phosphatases PP2A, PP4 and PP6 by protecting their partially folded catalytic subunits from degradative polyubiquitination until they associate with regulatory subunits.</text>
</comment>
<comment type="subunit">
    <text evidence="1 4">Interacts with PPP2CB, and with PP4 and PP6. Interacts with MID2. Interacts with ubiquitin (By similarity). Interacts with partially folded PPP2CA, but not with the fully active protein. Interacts with MID1.</text>
</comment>
<comment type="interaction">
    <interactant intactId="EBI-7002233">
        <id>Q61249</id>
    </interactant>
    <interactant intactId="EBI-397144">
        <id>P63330</id>
        <label>Ppp2ca</label>
    </interactant>
    <organismsDiffer>false</organismsDiffer>
    <experiments>2</experiments>
</comment>
<comment type="interaction">
    <interactant intactId="EBI-7002233">
        <id>Q61249</id>
    </interactant>
    <interactant intactId="EBI-712311">
        <id>P67775</id>
        <label>PPP2CA</label>
    </interactant>
    <organismsDiffer>true</organismsDiffer>
    <experiments>3</experiments>
</comment>
<comment type="subcellular location">
    <subcellularLocation>
        <location evidence="5">Cytoplasm</location>
    </subcellularLocation>
</comment>
<comment type="tissue specificity">
    <text>Expressed in spleen, thymus, liver and brain. Ubiquitously expressed in B lineage cell lines.</text>
</comment>
<comment type="domain">
    <text>The UIM domain is required for protective effect on PP2A.</text>
</comment>
<comment type="PTM">
    <text>Phosphorylated.</text>
</comment>
<comment type="PTM">
    <text evidence="1">Monoubiquitination by MID1 triggers calpain-mediated cleavage and switches IGBP1 activity from protective to destructive.</text>
</comment>
<comment type="similarity">
    <text evidence="5">Belongs to the IGBP1/TAP42 family.</text>
</comment>
<evidence type="ECO:0000250" key="1"/>
<evidence type="ECO:0000250" key="2">
    <source>
        <dbReference type="UniProtKB" id="P78318"/>
    </source>
</evidence>
<evidence type="ECO:0000256" key="3">
    <source>
        <dbReference type="SAM" id="MobiDB-lite"/>
    </source>
</evidence>
<evidence type="ECO:0000269" key="4">
    <source>
    </source>
</evidence>
<evidence type="ECO:0000305" key="5"/>
<evidence type="ECO:0007829" key="6">
    <source>
        <dbReference type="PDB" id="3QC1"/>
    </source>
</evidence>
<organism>
    <name type="scientific">Mus musculus</name>
    <name type="common">Mouse</name>
    <dbReference type="NCBI Taxonomy" id="10090"/>
    <lineage>
        <taxon>Eukaryota</taxon>
        <taxon>Metazoa</taxon>
        <taxon>Chordata</taxon>
        <taxon>Craniata</taxon>
        <taxon>Vertebrata</taxon>
        <taxon>Euteleostomi</taxon>
        <taxon>Mammalia</taxon>
        <taxon>Eutheria</taxon>
        <taxon>Euarchontoglires</taxon>
        <taxon>Glires</taxon>
        <taxon>Rodentia</taxon>
        <taxon>Myomorpha</taxon>
        <taxon>Muroidea</taxon>
        <taxon>Muridae</taxon>
        <taxon>Murinae</taxon>
        <taxon>Mus</taxon>
        <taxon>Mus</taxon>
    </lineage>
</organism>
<feature type="chain" id="PRO_0000218619" description="Immunoglobulin-binding protein 1">
    <location>
        <begin position="1"/>
        <end position="340"/>
    </location>
</feature>
<feature type="domain" description="UIM" evidence="5">
    <location>
        <begin position="47"/>
        <end position="61"/>
    </location>
</feature>
<feature type="region of interest" description="Interaction with PPP2CA" evidence="1">
    <location>
        <begin position="99"/>
        <end position="203"/>
    </location>
</feature>
<feature type="region of interest" description="Disordered" evidence="3">
    <location>
        <begin position="223"/>
        <end position="242"/>
    </location>
</feature>
<feature type="region of interest" description="Interaction with MID1" evidence="1">
    <location>
        <begin position="226"/>
        <end position="291"/>
    </location>
</feature>
<feature type="region of interest" description="Disordered" evidence="3">
    <location>
        <begin position="291"/>
        <end position="340"/>
    </location>
</feature>
<feature type="compositionally biased region" description="Low complexity" evidence="3">
    <location>
        <begin position="292"/>
        <end position="301"/>
    </location>
</feature>
<feature type="compositionally biased region" description="Acidic residues" evidence="3">
    <location>
        <begin position="302"/>
        <end position="312"/>
    </location>
</feature>
<feature type="compositionally biased region" description="Basic and acidic residues" evidence="3">
    <location>
        <begin position="313"/>
        <end position="330"/>
    </location>
</feature>
<feature type="site" description="Cleavage; by calpain" evidence="1">
    <location>
        <begin position="256"/>
        <end position="257"/>
    </location>
</feature>
<feature type="modified residue" description="N6-acetyllysine" evidence="2">
    <location>
        <position position="242"/>
    </location>
</feature>
<feature type="helix" evidence="6">
    <location>
        <begin position="13"/>
        <end position="29"/>
    </location>
</feature>
<feature type="helix" evidence="6">
    <location>
        <begin position="37"/>
        <end position="60"/>
    </location>
</feature>
<feature type="turn" evidence="6">
    <location>
        <begin position="61"/>
        <end position="63"/>
    </location>
</feature>
<feature type="strand" evidence="6">
    <location>
        <begin position="65"/>
        <end position="67"/>
    </location>
</feature>
<feature type="turn" evidence="6">
    <location>
        <begin position="74"/>
        <end position="76"/>
    </location>
</feature>
<feature type="helix" evidence="6">
    <location>
        <begin position="77"/>
        <end position="81"/>
    </location>
</feature>
<feature type="helix" evidence="6">
    <location>
        <begin position="82"/>
        <end position="90"/>
    </location>
</feature>
<feature type="helix" evidence="6">
    <location>
        <begin position="96"/>
        <end position="98"/>
    </location>
</feature>
<feature type="helix" evidence="6">
    <location>
        <begin position="99"/>
        <end position="114"/>
    </location>
</feature>
<feature type="helix" evidence="6">
    <location>
        <begin position="147"/>
        <end position="181"/>
    </location>
</feature>
<feature type="helix" evidence="6">
    <location>
        <begin position="187"/>
        <end position="219"/>
    </location>
</feature>
<reference key="1">
    <citation type="journal article" date="1995" name="J. Immunol.">
        <title>Molecular cloning of a cDNA clone encoding a phosphoprotein component related to the Ig receptor-mediated signal transduction.</title>
        <authorList>
            <person name="Inui S."/>
            <person name="Kuwahara K."/>
            <person name="Mizutani J."/>
            <person name="Maeda K."/>
            <person name="Kawai T."/>
            <person name="Nakayasu H."/>
            <person name="Sakaguchi N."/>
        </authorList>
    </citation>
    <scope>NUCLEOTIDE SEQUENCE [MRNA]</scope>
    <source>
        <strain>NZC</strain>
        <tissue>B-cell</tissue>
    </source>
</reference>
<reference key="2">
    <citation type="journal article" date="1998" name="Gene">
        <title>The gene structure and promoter analysis of mouse lymphocyte signal transduction molecule alpha 4 that is related to the yeast TAP42 involved in a rapamycin-sensitive pathway.</title>
        <authorList>
            <person name="Maeda K."/>
            <person name="Inui S."/>
            <person name="Sanjo H."/>
            <person name="Sakaguchi N."/>
        </authorList>
    </citation>
    <scope>NUCLEOTIDE SEQUENCE [GENOMIC DNA] OF 1-63</scope>
    <source>
        <strain>BALB/cJ</strain>
        <tissue>Liver</tissue>
    </source>
</reference>
<reference key="3">
    <citation type="journal article" date="2010" name="Cell">
        <title>A tissue-specific atlas of mouse protein phosphorylation and expression.</title>
        <authorList>
            <person name="Huttlin E.L."/>
            <person name="Jedrychowski M.P."/>
            <person name="Elias J.E."/>
            <person name="Goswami T."/>
            <person name="Rad R."/>
            <person name="Beausoleil S.A."/>
            <person name="Villen J."/>
            <person name="Haas W."/>
            <person name="Sowa M.E."/>
            <person name="Gygi S.P."/>
        </authorList>
    </citation>
    <scope>IDENTIFICATION BY MASS SPECTROMETRY [LARGE SCALE ANALYSIS]</scope>
    <source>
        <tissue>Brain</tissue>
        <tissue>Brown adipose tissue</tissue>
        <tissue>Heart</tissue>
        <tissue>Kidney</tissue>
        <tissue>Liver</tissue>
        <tissue>Lung</tissue>
        <tissue>Pancreas</tissue>
        <tissue>Spleen</tissue>
    </source>
</reference>
<reference key="4">
    <citation type="journal article" date="2011" name="J. Biol. Chem.">
        <title>The E3 ubiquitin ligase- and protein phosphatase 2A (PP2A)-binding domains of the Alpha4 protein are both required for Alpha4 to inhibit PP2A degradation.</title>
        <authorList>
            <person name="LeNoue-Newton M."/>
            <person name="Watkins G.R."/>
            <person name="Zou P."/>
            <person name="Germane K.L."/>
            <person name="McCorvey L.R."/>
            <person name="Wadzinski B.E."/>
            <person name="Spiller B.W."/>
        </authorList>
    </citation>
    <scope>X-RAY CRYSTALLOGRAPHY (2.35 ANGSTROMS) OF 1-223</scope>
    <scope>INTERACTION WITH MID1 AND PPP2CA</scope>
</reference>
<proteinExistence type="evidence at protein level"/>
<dbReference type="EMBL" id="L31652">
    <property type="protein sequence ID" value="AAA67891.1"/>
    <property type="molecule type" value="mRNA"/>
</dbReference>
<dbReference type="EMBL" id="AJ000633">
    <property type="protein sequence ID" value="CAA04190.1"/>
    <property type="molecule type" value="Genomic_DNA"/>
</dbReference>
<dbReference type="EMBL" id="AJ223156">
    <property type="protein sequence ID" value="CAA11135.1"/>
    <property type="molecule type" value="Genomic_DNA"/>
</dbReference>
<dbReference type="EMBL" id="AJ223157">
    <property type="protein sequence ID" value="CAA11135.1"/>
    <property type="status" value="JOINED"/>
    <property type="molecule type" value="Genomic_DNA"/>
</dbReference>
<dbReference type="EMBL" id="AJ223158">
    <property type="protein sequence ID" value="CAA11135.1"/>
    <property type="status" value="JOINED"/>
    <property type="molecule type" value="Genomic_DNA"/>
</dbReference>
<dbReference type="EMBL" id="AJ223159">
    <property type="protein sequence ID" value="CAA11135.1"/>
    <property type="status" value="JOINED"/>
    <property type="molecule type" value="Genomic_DNA"/>
</dbReference>
<dbReference type="EMBL" id="AJ223160">
    <property type="protein sequence ID" value="CAA11135.1"/>
    <property type="status" value="JOINED"/>
    <property type="molecule type" value="Genomic_DNA"/>
</dbReference>
<dbReference type="EMBL" id="AJ000634">
    <property type="protein sequence ID" value="CAA04191.1"/>
    <property type="molecule type" value="Genomic_DNA"/>
</dbReference>
<dbReference type="CCDS" id="CCDS30302.1"/>
<dbReference type="PIR" id="I49451">
    <property type="entry name" value="I49451"/>
</dbReference>
<dbReference type="RefSeq" id="NP_032810.4">
    <property type="nucleotide sequence ID" value="NM_008784.3"/>
</dbReference>
<dbReference type="PDB" id="3QC1">
    <property type="method" value="X-ray"/>
    <property type="resolution" value="2.35 A"/>
    <property type="chains" value="A=1-223"/>
</dbReference>
<dbReference type="PDBsum" id="3QC1"/>
<dbReference type="SMR" id="Q61249"/>
<dbReference type="BioGRID" id="202041">
    <property type="interactions" value="30"/>
</dbReference>
<dbReference type="FunCoup" id="Q61249">
    <property type="interactions" value="2064"/>
</dbReference>
<dbReference type="IntAct" id="Q61249">
    <property type="interactions" value="5"/>
</dbReference>
<dbReference type="MINT" id="Q61249"/>
<dbReference type="STRING" id="10090.ENSMUSP00000033570"/>
<dbReference type="GlyGen" id="Q61249">
    <property type="glycosylation" value="1 site, 1 O-linked glycan (1 site)"/>
</dbReference>
<dbReference type="iPTMnet" id="Q61249"/>
<dbReference type="PhosphoSitePlus" id="Q61249"/>
<dbReference type="SwissPalm" id="Q61249"/>
<dbReference type="REPRODUCTION-2DPAGE" id="Q61249"/>
<dbReference type="jPOST" id="Q61249"/>
<dbReference type="PaxDb" id="10090-ENSMUSP00000033570"/>
<dbReference type="PeptideAtlas" id="Q61249"/>
<dbReference type="ProteomicsDB" id="269531"/>
<dbReference type="Pumba" id="Q61249"/>
<dbReference type="DNASU" id="18518"/>
<dbReference type="Ensembl" id="ENSMUST00000033570.6">
    <property type="protein sequence ID" value="ENSMUSP00000033570.6"/>
    <property type="gene ID" value="ENSMUSG00000031221.8"/>
</dbReference>
<dbReference type="GeneID" id="18518"/>
<dbReference type="KEGG" id="mmu:18518"/>
<dbReference type="UCSC" id="uc009tvz.2">
    <property type="organism name" value="mouse"/>
</dbReference>
<dbReference type="AGR" id="MGI:1346500"/>
<dbReference type="CTD" id="3476"/>
<dbReference type="MGI" id="MGI:1346500">
    <property type="gene designation" value="Igbp1"/>
</dbReference>
<dbReference type="VEuPathDB" id="HostDB:ENSMUSG00000031221"/>
<dbReference type="eggNOG" id="KOG2830">
    <property type="taxonomic scope" value="Eukaryota"/>
</dbReference>
<dbReference type="GeneTree" id="ENSGT00390000002414"/>
<dbReference type="HOGENOM" id="CLU_041824_1_0_1"/>
<dbReference type="InParanoid" id="Q61249"/>
<dbReference type="OMA" id="EYELCEA"/>
<dbReference type="OrthoDB" id="10261753at2759"/>
<dbReference type="PhylomeDB" id="Q61249"/>
<dbReference type="TreeFam" id="TF313433"/>
<dbReference type="BioGRID-ORCS" id="18518">
    <property type="hits" value="26 hits in 77 CRISPR screens"/>
</dbReference>
<dbReference type="ChiTaRS" id="Igbp1">
    <property type="organism name" value="mouse"/>
</dbReference>
<dbReference type="EvolutionaryTrace" id="Q61249"/>
<dbReference type="PRO" id="PR:Q61249"/>
<dbReference type="Proteomes" id="UP000000589">
    <property type="component" value="Chromosome X"/>
</dbReference>
<dbReference type="RNAct" id="Q61249">
    <property type="molecule type" value="protein"/>
</dbReference>
<dbReference type="Bgee" id="ENSMUSG00000031221">
    <property type="expression patterns" value="Expressed in vas deferens and 263 other cell types or tissues"/>
</dbReference>
<dbReference type="GO" id="GO:0005737">
    <property type="term" value="C:cytoplasm"/>
    <property type="evidence" value="ECO:0000314"/>
    <property type="project" value="UniProtKB"/>
</dbReference>
<dbReference type="GO" id="GO:0005874">
    <property type="term" value="C:microtubule"/>
    <property type="evidence" value="ECO:0000316"/>
    <property type="project" value="UniProtKB"/>
</dbReference>
<dbReference type="GO" id="GO:0019899">
    <property type="term" value="F:enzyme binding"/>
    <property type="evidence" value="ECO:0000353"/>
    <property type="project" value="UniProtKB"/>
</dbReference>
<dbReference type="GO" id="GO:0031434">
    <property type="term" value="F:mitogen-activated protein kinase kinase binding"/>
    <property type="evidence" value="ECO:0000353"/>
    <property type="project" value="UniProtKB"/>
</dbReference>
<dbReference type="GO" id="GO:0019904">
    <property type="term" value="F:protein domain specific binding"/>
    <property type="evidence" value="ECO:0000314"/>
    <property type="project" value="UniProtKB"/>
</dbReference>
<dbReference type="GO" id="GO:0051721">
    <property type="term" value="F:protein phosphatase 2A binding"/>
    <property type="evidence" value="ECO:0007669"/>
    <property type="project" value="Ensembl"/>
</dbReference>
<dbReference type="GO" id="GO:0044877">
    <property type="term" value="F:protein-containing complex binding"/>
    <property type="evidence" value="ECO:0007669"/>
    <property type="project" value="Ensembl"/>
</dbReference>
<dbReference type="GO" id="GO:0042113">
    <property type="term" value="P:B cell activation"/>
    <property type="evidence" value="ECO:0007669"/>
    <property type="project" value="UniProtKB-KW"/>
</dbReference>
<dbReference type="GO" id="GO:2001234">
    <property type="term" value="P:negative regulation of apoptotic signaling pathway"/>
    <property type="evidence" value="ECO:0000315"/>
    <property type="project" value="MGI"/>
</dbReference>
<dbReference type="GO" id="GO:0035306">
    <property type="term" value="P:positive regulation of dephosphorylation"/>
    <property type="evidence" value="ECO:0000315"/>
    <property type="project" value="UniProtKB"/>
</dbReference>
<dbReference type="GO" id="GO:0045944">
    <property type="term" value="P:positive regulation of transcription by RNA polymerase II"/>
    <property type="evidence" value="ECO:0000315"/>
    <property type="project" value="UniProtKB"/>
</dbReference>
<dbReference type="FunFam" id="1.25.40.540:FF:000003">
    <property type="entry name" value="Immunoglobulin (CD79A)-binding protein 1"/>
    <property type="match status" value="1"/>
</dbReference>
<dbReference type="Gene3D" id="6.10.250.1140">
    <property type="match status" value="1"/>
</dbReference>
<dbReference type="Gene3D" id="1.25.40.540">
    <property type="entry name" value="TAP42-like family"/>
    <property type="match status" value="1"/>
</dbReference>
<dbReference type="InterPro" id="IPR038511">
    <property type="entry name" value="TAP42/TAP46-like_sf"/>
</dbReference>
<dbReference type="InterPro" id="IPR007304">
    <property type="entry name" value="TAP46-like"/>
</dbReference>
<dbReference type="PANTHER" id="PTHR10933">
    <property type="entry name" value="IMMUNOGLOBULIN-BINDING PROTEIN 1"/>
    <property type="match status" value="1"/>
</dbReference>
<dbReference type="PANTHER" id="PTHR10933:SF11">
    <property type="entry name" value="IMMUNOGLOBULIN-BINDING PROTEIN 1"/>
    <property type="match status" value="1"/>
</dbReference>
<dbReference type="Pfam" id="PF04177">
    <property type="entry name" value="TAP42"/>
    <property type="match status" value="1"/>
</dbReference>
<sequence length="340" mass="38971">MAASEDELLLPRLPELFETSKKLLEDVEVATEPTGSRTIQDKVSKGLELLEKAAGMLSQLDLFSRNEDLEEIASTDLKYLMVPALQGALTMKQVNPSKRLDHLQRAREHFVHFLTQCHCYHVAEFQLPQTKTNSAENNTASSSMAYPNLVAMASQRQAKIERYKQKKEVEHRLSALKSAVESGQADDERVREYHLLHLRRWIAVSLEELESIDQEIKILKEKDSPREETACHSSLPEKPPMKPFILTRNKAQAKVFGTGYPSLATMTVSDWYEQHQKYGVLPDRGIAKPASADFQRAAQQQEDQEQKDEESEEKALHRMREWDDWKDTHPRGYGNRQNMG</sequence>
<gene>
    <name type="primary">Igbp1</name>
    <name type="synonym">Pc52</name>
</gene>
<keyword id="KW-0002">3D-structure</keyword>
<keyword id="KW-0007">Acetylation</keyword>
<keyword id="KW-0075">B-cell activation</keyword>
<keyword id="KW-0143">Chaperone</keyword>
<keyword id="KW-0963">Cytoplasm</keyword>
<keyword id="KW-0597">Phosphoprotein</keyword>
<keyword id="KW-1185">Reference proteome</keyword>
<keyword id="KW-0832">Ubl conjugation</keyword>